<evidence type="ECO:0000269" key="1">
    <source>
    </source>
</evidence>
<evidence type="ECO:0000269" key="2">
    <source>
    </source>
</evidence>
<evidence type="ECO:0000303" key="3">
    <source>
    </source>
</evidence>
<evidence type="ECO:0000303" key="4">
    <source>
    </source>
</evidence>
<evidence type="ECO:0000305" key="5"/>
<evidence type="ECO:0000312" key="6">
    <source>
        <dbReference type="EMBL" id="AAY92059.1"/>
    </source>
</evidence>
<evidence type="ECO:0007744" key="7">
    <source>
        <dbReference type="PDB" id="5DBJ"/>
    </source>
</evidence>
<evidence type="ECO:0007829" key="8">
    <source>
        <dbReference type="PDB" id="5DBJ"/>
    </source>
</evidence>
<accession>Q4KCZ0</accession>
<accession>Q9X3R1</accession>
<proteinExistence type="evidence at protein level"/>
<keyword id="KW-0002">3D-structure</keyword>
<keyword id="KW-0045">Antibiotic biosynthesis</keyword>
<keyword id="KW-0868">Chloride</keyword>
<keyword id="KW-0274">FAD</keyword>
<keyword id="KW-0285">Flavoprotein</keyword>
<keyword id="KW-0547">Nucleotide-binding</keyword>
<keyword id="KW-0560">Oxidoreductase</keyword>
<gene>
    <name evidence="3" type="primary">pltA</name>
    <name evidence="6" type="ordered locus">PFL_2787</name>
</gene>
<comment type="function">
    <text evidence="1">Involved in the biosynthesis of the antibiotic pyoluteorin (PubMed:16162666). Catalyzes the dichlorination of the pyrrole ring of pyrrolyl-S-PltL, generating the 5-chloropyrrolyl-S-PltL intermediate and then the 4,5-dichloropyrrolyl-S-PltL product (PubMed:16162666).</text>
</comment>
<comment type="catalytic activity">
    <reaction evidence="1">
        <text>(1H-pyrrole-2-carbonyl)-[peptidyl-carrier protein] + 2 FADH2 + 2 chloride + 2 O2 = (4,5-dichloro-1H-pyrrole-2-carbonyl)-[peptidyl-carrier protein] + 2 FAD + 4 H2O</text>
        <dbReference type="Rhea" id="RHEA:56380"/>
        <dbReference type="Rhea" id="RHEA-COMP:14110"/>
        <dbReference type="Rhea" id="RHEA-COMP:14498"/>
        <dbReference type="ChEBI" id="CHEBI:15377"/>
        <dbReference type="ChEBI" id="CHEBI:15379"/>
        <dbReference type="ChEBI" id="CHEBI:17996"/>
        <dbReference type="ChEBI" id="CHEBI:57692"/>
        <dbReference type="ChEBI" id="CHEBI:58307"/>
        <dbReference type="ChEBI" id="CHEBI:138623"/>
        <dbReference type="ChEBI" id="CHEBI:140219"/>
        <dbReference type="EC" id="1.14.19.56"/>
    </reaction>
    <physiologicalReaction direction="left-to-right" evidence="1">
        <dbReference type="Rhea" id="RHEA:56381"/>
    </physiologicalReaction>
</comment>
<comment type="catalytic activity">
    <reaction evidence="1">
        <text>(1H-pyrrole-2-carbonyl)-[peptidyl-carrier protein] + FADH2 + chloride + O2 = (5-chloro-1H-pyrrole-2-carbonyl)-[peptidyl-carrier protein] + FAD + 2 H2O</text>
        <dbReference type="Rhea" id="RHEA:56384"/>
        <dbReference type="Rhea" id="RHEA-COMP:14110"/>
        <dbReference type="Rhea" id="RHEA-COMP:14497"/>
        <dbReference type="ChEBI" id="CHEBI:15377"/>
        <dbReference type="ChEBI" id="CHEBI:15379"/>
        <dbReference type="ChEBI" id="CHEBI:17996"/>
        <dbReference type="ChEBI" id="CHEBI:57692"/>
        <dbReference type="ChEBI" id="CHEBI:58307"/>
        <dbReference type="ChEBI" id="CHEBI:138623"/>
        <dbReference type="ChEBI" id="CHEBI:140221"/>
    </reaction>
    <physiologicalReaction direction="left-to-right" evidence="1">
        <dbReference type="Rhea" id="RHEA:56385"/>
    </physiologicalReaction>
</comment>
<comment type="catalytic activity">
    <reaction evidence="1">
        <text>(5-chloro-1H-pyrrole-2-carbonyl)-[peptidyl-carrier protein] + FADH2 + chloride + O2 = (4,5-dichloro-1H-pyrrole-2-carbonyl)-[peptidyl-carrier protein] + FAD + 2 H2O</text>
        <dbReference type="Rhea" id="RHEA:56388"/>
        <dbReference type="Rhea" id="RHEA-COMP:14497"/>
        <dbReference type="Rhea" id="RHEA-COMP:14498"/>
        <dbReference type="ChEBI" id="CHEBI:15377"/>
        <dbReference type="ChEBI" id="CHEBI:15379"/>
        <dbReference type="ChEBI" id="CHEBI:17996"/>
        <dbReference type="ChEBI" id="CHEBI:57692"/>
        <dbReference type="ChEBI" id="CHEBI:58307"/>
        <dbReference type="ChEBI" id="CHEBI:140219"/>
        <dbReference type="ChEBI" id="CHEBI:140221"/>
    </reaction>
    <physiologicalReaction direction="left-to-right" evidence="1">
        <dbReference type="Rhea" id="RHEA:56389"/>
    </physiologicalReaction>
</comment>
<comment type="pathway">
    <text evidence="1">Antibiotic biosynthesis.</text>
</comment>
<comment type="subunit">
    <text evidence="2">Homodimer.</text>
</comment>
<comment type="domain">
    <text evidence="2">Contains an additional unique helical region at the C-terminus. This C-terminal region blocks a putative substrate-binding cleft, suggesting that a conformational change involving repositioning of this region is necessary to allow binding of the pyrrolyl-S-PltL substrate for its dichlorination by PltA.</text>
</comment>
<comment type="similarity">
    <text evidence="5">Belongs to the flavin-dependent halogenase family.</text>
</comment>
<organism>
    <name type="scientific">Pseudomonas fluorescens (strain ATCC BAA-477 / NRRL B-23932 / Pf-5)</name>
    <dbReference type="NCBI Taxonomy" id="220664"/>
    <lineage>
        <taxon>Bacteria</taxon>
        <taxon>Pseudomonadati</taxon>
        <taxon>Pseudomonadota</taxon>
        <taxon>Gammaproteobacteria</taxon>
        <taxon>Pseudomonadales</taxon>
        <taxon>Pseudomonadaceae</taxon>
        <taxon>Pseudomonas</taxon>
    </lineage>
</organism>
<feature type="chain" id="PRO_0000452248" description="1H-pyrrole-2-carbonyl-[peptidyl-carrier protein] chlorinase">
    <location>
        <begin position="1"/>
        <end position="449"/>
    </location>
</feature>
<feature type="binding site" evidence="2 7">
    <location>
        <position position="16"/>
    </location>
    <ligand>
        <name>FAD</name>
        <dbReference type="ChEBI" id="CHEBI:57692"/>
    </ligand>
</feature>
<feature type="binding site" evidence="2 7">
    <location>
        <position position="35"/>
    </location>
    <ligand>
        <name>FAD</name>
        <dbReference type="ChEBI" id="CHEBI:57692"/>
    </ligand>
</feature>
<feature type="binding site" evidence="2 7">
    <location>
        <position position="41"/>
    </location>
    <ligand>
        <name>FAD</name>
        <dbReference type="ChEBI" id="CHEBI:57692"/>
    </ligand>
</feature>
<feature type="binding site" evidence="2 7">
    <location>
        <position position="43"/>
    </location>
    <ligand>
        <name>FAD</name>
        <dbReference type="ChEBI" id="CHEBI:57692"/>
    </ligand>
</feature>
<feature type="binding site" evidence="2 7">
    <location>
        <position position="44"/>
    </location>
    <ligand>
        <name>FAD</name>
        <dbReference type="ChEBI" id="CHEBI:57692"/>
    </ligand>
</feature>
<feature type="binding site" evidence="2 7">
    <location>
        <position position="47"/>
    </location>
    <ligand>
        <name>FAD</name>
        <dbReference type="ChEBI" id="CHEBI:57692"/>
    </ligand>
</feature>
<feature type="binding site" evidence="2 7">
    <location>
        <position position="123"/>
    </location>
    <ligand>
        <name>FAD</name>
        <dbReference type="ChEBI" id="CHEBI:57692"/>
    </ligand>
</feature>
<feature type="binding site" evidence="2 7">
    <location>
        <position position="147"/>
    </location>
    <ligand>
        <name>FAD</name>
        <dbReference type="ChEBI" id="CHEBI:57692"/>
    </ligand>
</feature>
<feature type="binding site" evidence="2 7">
    <location>
        <position position="316"/>
    </location>
    <ligand>
        <name>FAD</name>
        <dbReference type="ChEBI" id="CHEBI:57692"/>
    </ligand>
</feature>
<feature type="binding site" evidence="2">
    <location>
        <position position="327"/>
    </location>
    <ligand>
        <name>chloride</name>
        <dbReference type="ChEBI" id="CHEBI:17996"/>
    </ligand>
</feature>
<feature type="binding site" evidence="2">
    <location>
        <position position="328"/>
    </location>
    <ligand>
        <name>chloride</name>
        <dbReference type="ChEBI" id="CHEBI:17996"/>
    </ligand>
</feature>
<feature type="binding site" evidence="2 7">
    <location>
        <position position="329"/>
    </location>
    <ligand>
        <name>FAD</name>
        <dbReference type="ChEBI" id="CHEBI:57692"/>
    </ligand>
</feature>
<feature type="strand" evidence="8">
    <location>
        <begin position="5"/>
        <end position="11"/>
    </location>
</feature>
<feature type="helix" evidence="8">
    <location>
        <begin position="15"/>
        <end position="26"/>
    </location>
</feature>
<feature type="strand" evidence="8">
    <location>
        <begin position="31"/>
        <end position="37"/>
    </location>
</feature>
<feature type="helix" evidence="8">
    <location>
        <begin position="50"/>
        <end position="52"/>
    </location>
</feature>
<feature type="helix" evidence="8">
    <location>
        <begin position="53"/>
        <end position="58"/>
    </location>
</feature>
<feature type="helix" evidence="8">
    <location>
        <begin position="62"/>
        <end position="66"/>
    </location>
</feature>
<feature type="turn" evidence="8">
    <location>
        <begin position="67"/>
        <end position="69"/>
    </location>
</feature>
<feature type="strand" evidence="8">
    <location>
        <begin position="75"/>
        <end position="82"/>
    </location>
</feature>
<feature type="helix" evidence="8">
    <location>
        <begin position="88"/>
        <end position="90"/>
    </location>
</feature>
<feature type="strand" evidence="8">
    <location>
        <begin position="95"/>
        <end position="104"/>
    </location>
</feature>
<feature type="helix" evidence="8">
    <location>
        <begin position="105"/>
        <end position="107"/>
    </location>
</feature>
<feature type="strand" evidence="8">
    <location>
        <begin position="118"/>
        <end position="120"/>
    </location>
</feature>
<feature type="helix" evidence="8">
    <location>
        <begin position="123"/>
        <end position="136"/>
    </location>
</feature>
<feature type="strand" evidence="8">
    <location>
        <begin position="140"/>
        <end position="144"/>
    </location>
</feature>
<feature type="strand" evidence="8">
    <location>
        <begin position="146"/>
        <end position="154"/>
    </location>
</feature>
<feature type="strand" evidence="8">
    <location>
        <begin position="157"/>
        <end position="166"/>
    </location>
</feature>
<feature type="strand" evidence="8">
    <location>
        <begin position="168"/>
        <end position="178"/>
    </location>
</feature>
<feature type="helix" evidence="8">
    <location>
        <begin position="185"/>
        <end position="189"/>
    </location>
</feature>
<feature type="strand" evidence="8">
    <location>
        <begin position="193"/>
        <end position="195"/>
    </location>
</feature>
<feature type="strand" evidence="8">
    <location>
        <begin position="201"/>
        <end position="209"/>
    </location>
</feature>
<feature type="helix" evidence="8">
    <location>
        <begin position="213"/>
        <end position="215"/>
    </location>
</feature>
<feature type="strand" evidence="8">
    <location>
        <begin position="225"/>
        <end position="230"/>
    </location>
</feature>
<feature type="strand" evidence="8">
    <location>
        <begin position="237"/>
        <end position="246"/>
    </location>
</feature>
<feature type="strand" evidence="8">
    <location>
        <begin position="248"/>
        <end position="255"/>
    </location>
</feature>
<feature type="helix" evidence="8">
    <location>
        <begin position="256"/>
        <end position="262"/>
    </location>
</feature>
<feature type="helix" evidence="8">
    <location>
        <begin position="266"/>
        <end position="274"/>
    </location>
</feature>
<feature type="helix" evidence="8">
    <location>
        <begin position="278"/>
        <end position="286"/>
    </location>
</feature>
<feature type="strand" evidence="8">
    <location>
        <begin position="287"/>
        <end position="289"/>
    </location>
</feature>
<feature type="strand" evidence="8">
    <location>
        <begin position="294"/>
        <end position="296"/>
    </location>
</feature>
<feature type="strand" evidence="8">
    <location>
        <begin position="301"/>
        <end position="304"/>
    </location>
</feature>
<feature type="strand" evidence="8">
    <location>
        <begin position="306"/>
        <end position="308"/>
    </location>
</feature>
<feature type="strand" evidence="8">
    <location>
        <begin position="311"/>
        <end position="313"/>
    </location>
</feature>
<feature type="helix" evidence="8">
    <location>
        <begin position="315"/>
        <end position="317"/>
    </location>
</feature>
<feature type="helix" evidence="8">
    <location>
        <begin position="328"/>
        <end position="349"/>
    </location>
</feature>
<feature type="helix" evidence="8">
    <location>
        <begin position="354"/>
        <end position="357"/>
    </location>
</feature>
<feature type="helix" evidence="8">
    <location>
        <begin position="358"/>
        <end position="381"/>
    </location>
</feature>
<feature type="helix" evidence="8">
    <location>
        <begin position="382"/>
        <end position="384"/>
    </location>
</feature>
<feature type="helix" evidence="8">
    <location>
        <begin position="385"/>
        <end position="390"/>
    </location>
</feature>
<feature type="helix" evidence="8">
    <location>
        <begin position="392"/>
        <end position="402"/>
    </location>
</feature>
<feature type="helix" evidence="8">
    <location>
        <begin position="414"/>
        <end position="427"/>
    </location>
</feature>
<feature type="strand" evidence="8">
    <location>
        <begin position="429"/>
        <end position="431"/>
    </location>
</feature>
<feature type="helix" evidence="8">
    <location>
        <begin position="434"/>
        <end position="436"/>
    </location>
</feature>
<name>PLTA_PSEF5</name>
<sequence length="449" mass="50677">MSDHDYDVVIIGGGPAGSTMASYLAKAGVKCAVFEKELFEREHVGESLVPATTPVLLEIGVMEKIEKANFPKKFGAAWTSADSGPEDKMGFQGLDHDFRSAEILFNERKQEGVDRDFTFHVDRGKFDRILLEHAGSLGAKVFQGVEIADVEFLSPGNVIVNAKLGKRSVEIKAKMVVDASGRNVLLGRRLGLREKDPVFNQFAIHSWFDNFDRKSATQSPDKVDYIFIHFLPMTNTWVWQIPITETITSVGVVTQKQNYTNSDLTYEEFFWEAVKTRENLHDALKASEQVRPFKKEADYSYGMKEVCGDSFVLIGDAARFVDPIFSSGVSVALNSARIASGDIIEAVKNNDFSKSSFTHYEGMIRNGIKNWYEFITLYYRLNILFTAFVQDPRYRLDILQLLQGDVYSGKRLEVLDKMREIIAAVESDPEHLWHKYLGDMQVPTAKPAF</sequence>
<dbReference type="EC" id="1.14.19.56" evidence="1"/>
<dbReference type="EMBL" id="AF081920">
    <property type="protein sequence ID" value="AAD24884.1"/>
    <property type="molecule type" value="Genomic_DNA"/>
</dbReference>
<dbReference type="EMBL" id="CP000076">
    <property type="protein sequence ID" value="AAY92059.1"/>
    <property type="molecule type" value="Genomic_DNA"/>
</dbReference>
<dbReference type="PIR" id="T17419">
    <property type="entry name" value="T17419"/>
</dbReference>
<dbReference type="RefSeq" id="WP_011061079.1">
    <property type="nucleotide sequence ID" value="NC_004129.6"/>
</dbReference>
<dbReference type="PDB" id="5DBJ">
    <property type="method" value="X-ray"/>
    <property type="resolution" value="2.75 A"/>
    <property type="chains" value="A/B/C/D/E=1-449"/>
</dbReference>
<dbReference type="PDBsum" id="5DBJ"/>
<dbReference type="SMR" id="Q4KCZ0"/>
<dbReference type="STRING" id="220664.PFL_2787"/>
<dbReference type="KEGG" id="pfl:PFL_2787"/>
<dbReference type="PATRIC" id="fig|220664.5.peg.2843"/>
<dbReference type="eggNOG" id="COG0644">
    <property type="taxonomic scope" value="Bacteria"/>
</dbReference>
<dbReference type="HOGENOM" id="CLU_024648_4_0_6"/>
<dbReference type="BioCyc" id="MetaCyc:MONOMER-20315"/>
<dbReference type="BRENDA" id="1.14.19.56">
    <property type="organism ID" value="5121"/>
</dbReference>
<dbReference type="EvolutionaryTrace" id="Q4KCZ0"/>
<dbReference type="Proteomes" id="UP000008540">
    <property type="component" value="Chromosome"/>
</dbReference>
<dbReference type="GO" id="GO:0047651">
    <property type="term" value="F:alkylhalidase activity"/>
    <property type="evidence" value="ECO:0000314"/>
    <property type="project" value="JCVI"/>
</dbReference>
<dbReference type="GO" id="GO:0071949">
    <property type="term" value="F:FAD binding"/>
    <property type="evidence" value="ECO:0007669"/>
    <property type="project" value="InterPro"/>
</dbReference>
<dbReference type="GO" id="GO:0016491">
    <property type="term" value="F:oxidoreductase activity"/>
    <property type="evidence" value="ECO:0007669"/>
    <property type="project" value="UniProtKB-KW"/>
</dbReference>
<dbReference type="GO" id="GO:0017000">
    <property type="term" value="P:antibiotic biosynthetic process"/>
    <property type="evidence" value="ECO:0007669"/>
    <property type="project" value="UniProtKB-KW"/>
</dbReference>
<dbReference type="Gene3D" id="3.50.50.60">
    <property type="entry name" value="FAD/NAD(P)-binding domain"/>
    <property type="match status" value="1"/>
</dbReference>
<dbReference type="InterPro" id="IPR002938">
    <property type="entry name" value="FAD-bd"/>
</dbReference>
<dbReference type="InterPro" id="IPR036188">
    <property type="entry name" value="FAD/NAD-bd_sf"/>
</dbReference>
<dbReference type="InterPro" id="IPR050816">
    <property type="entry name" value="Flavin-dep_Halogenase_NPB"/>
</dbReference>
<dbReference type="PANTHER" id="PTHR43747:SF5">
    <property type="entry name" value="FAD-BINDING DOMAIN-CONTAINING PROTEIN"/>
    <property type="match status" value="1"/>
</dbReference>
<dbReference type="PANTHER" id="PTHR43747">
    <property type="entry name" value="FAD-BINDING PROTEIN"/>
    <property type="match status" value="1"/>
</dbReference>
<dbReference type="Pfam" id="PF01494">
    <property type="entry name" value="FAD_binding_3"/>
    <property type="match status" value="1"/>
</dbReference>
<dbReference type="PRINTS" id="PR00420">
    <property type="entry name" value="RNGMNOXGNASE"/>
</dbReference>
<dbReference type="SUPFAM" id="SSF51905">
    <property type="entry name" value="FAD/NAD(P)-binding domain"/>
    <property type="match status" value="1"/>
</dbReference>
<reference key="1">
    <citation type="journal article" date="1999" name="J. Bacteriol.">
        <title>Characterization of the pyoluteorin biosynthetic gene cluster of Pseudomonas fluorescens Pf-5.</title>
        <authorList>
            <person name="Nowak-Thompson B."/>
            <person name="Chaney N."/>
            <person name="Wing J.S."/>
            <person name="Gould S.J."/>
            <person name="Loper J.E."/>
        </authorList>
    </citation>
    <scope>NUCLEOTIDE SEQUENCE [GENOMIC DNA]</scope>
    <source>
        <strain>ATCC BAA-477 / NRRL B-23932 / Pf-5</strain>
    </source>
</reference>
<reference key="2">
    <citation type="journal article" date="2005" name="Nat. Biotechnol.">
        <title>Complete genome sequence of the plant commensal Pseudomonas fluorescens Pf-5.</title>
        <authorList>
            <person name="Paulsen I.T."/>
            <person name="Press C.M."/>
            <person name="Ravel J."/>
            <person name="Kobayashi D.Y."/>
            <person name="Myers G.S.A."/>
            <person name="Mavrodi D.V."/>
            <person name="DeBoy R.T."/>
            <person name="Seshadri R."/>
            <person name="Ren Q."/>
            <person name="Madupu R."/>
            <person name="Dodson R.J."/>
            <person name="Durkin A.S."/>
            <person name="Brinkac L.M."/>
            <person name="Daugherty S.C."/>
            <person name="Sullivan S.A."/>
            <person name="Rosovitz M.J."/>
            <person name="Gwinn M.L."/>
            <person name="Zhou L."/>
            <person name="Schneider D.J."/>
            <person name="Cartinhour S.W."/>
            <person name="Nelson W.C."/>
            <person name="Weidman J."/>
            <person name="Watkins K."/>
            <person name="Tran K."/>
            <person name="Khouri H."/>
            <person name="Pierson E.A."/>
            <person name="Pierson L.S. III"/>
            <person name="Thomashow L.S."/>
            <person name="Loper J.E."/>
        </authorList>
    </citation>
    <scope>NUCLEOTIDE SEQUENCE [LARGE SCALE GENOMIC DNA]</scope>
    <source>
        <strain>ATCC BAA-477 / NRRL B-23932 / Pf-5</strain>
    </source>
</reference>
<reference key="3">
    <citation type="journal article" date="2005" name="Proc. Natl. Acad. Sci. U.S.A.">
        <title>Dichlorination of a pyrrolyl-S-carrier protein by FADH2-dependent halogenase PltA during pyoluteorin biosynthesis.</title>
        <authorList>
            <person name="Dorrestein P.C."/>
            <person name="Yeh E."/>
            <person name="Garneau-Tsodikova S."/>
            <person name="Kelleher N.L."/>
            <person name="Walsh C.T."/>
        </authorList>
    </citation>
    <scope>FUNCTION</scope>
    <scope>CATALYTIC ACTIVITY</scope>
    <scope>PATHWAY</scope>
    <source>
        <strain>ATCC BAA-477 / NRRL B-23932 / Pf-5</strain>
    </source>
</reference>
<reference evidence="7" key="4">
    <citation type="journal article" date="2015" name="J. Struct. Biol.">
        <title>Crystal structure of halogenase PltA from the pyoluteorin biosynthetic pathway.</title>
        <authorList>
            <person name="Pang A.H."/>
            <person name="Garneau-Tsodikova S."/>
            <person name="Tsodikov O.V."/>
        </authorList>
    </citation>
    <scope>X-RAY CRYSTALLOGRAPHY (2.75 ANGSTROMS) IN COMPLEX WITH FAD AND CHLORIDE</scope>
    <scope>SUBUNIT</scope>
    <scope>DOMAIN</scope>
    <source>
        <strain>ATCC BAA-477 / NRRL B-23932 / Pf-5</strain>
    </source>
</reference>
<protein>
    <recommendedName>
        <fullName evidence="5">1H-pyrrole-2-carbonyl-[peptidyl-carrier protein] chlorinase</fullName>
        <ecNumber evidence="1">1.14.19.56</ecNumber>
    </recommendedName>
    <alternativeName>
        <fullName evidence="4">FADH2-dependent halogenase PltA</fullName>
    </alternativeName>
</protein>